<name>CH60_SHEAM</name>
<dbReference type="EC" id="5.6.1.7" evidence="1"/>
<dbReference type="EMBL" id="CP000507">
    <property type="protein sequence ID" value="ABM01327.1"/>
    <property type="molecule type" value="Genomic_DNA"/>
</dbReference>
<dbReference type="RefSeq" id="WP_011761231.1">
    <property type="nucleotide sequence ID" value="NC_008700.1"/>
</dbReference>
<dbReference type="SMR" id="A1SAC0"/>
<dbReference type="STRING" id="326297.Sama_3124"/>
<dbReference type="KEGG" id="saz:Sama_3124"/>
<dbReference type="eggNOG" id="COG0459">
    <property type="taxonomic scope" value="Bacteria"/>
</dbReference>
<dbReference type="HOGENOM" id="CLU_016503_3_0_6"/>
<dbReference type="OrthoDB" id="9766614at2"/>
<dbReference type="Proteomes" id="UP000009175">
    <property type="component" value="Chromosome"/>
</dbReference>
<dbReference type="GO" id="GO:0005737">
    <property type="term" value="C:cytoplasm"/>
    <property type="evidence" value="ECO:0007669"/>
    <property type="project" value="UniProtKB-SubCell"/>
</dbReference>
<dbReference type="GO" id="GO:0005524">
    <property type="term" value="F:ATP binding"/>
    <property type="evidence" value="ECO:0007669"/>
    <property type="project" value="UniProtKB-UniRule"/>
</dbReference>
<dbReference type="GO" id="GO:0140662">
    <property type="term" value="F:ATP-dependent protein folding chaperone"/>
    <property type="evidence" value="ECO:0007669"/>
    <property type="project" value="InterPro"/>
</dbReference>
<dbReference type="GO" id="GO:0016853">
    <property type="term" value="F:isomerase activity"/>
    <property type="evidence" value="ECO:0007669"/>
    <property type="project" value="UniProtKB-KW"/>
</dbReference>
<dbReference type="GO" id="GO:0051082">
    <property type="term" value="F:unfolded protein binding"/>
    <property type="evidence" value="ECO:0007669"/>
    <property type="project" value="UniProtKB-UniRule"/>
</dbReference>
<dbReference type="GO" id="GO:0042026">
    <property type="term" value="P:protein refolding"/>
    <property type="evidence" value="ECO:0007669"/>
    <property type="project" value="UniProtKB-UniRule"/>
</dbReference>
<dbReference type="CDD" id="cd03344">
    <property type="entry name" value="GroEL"/>
    <property type="match status" value="1"/>
</dbReference>
<dbReference type="FunFam" id="1.10.560.10:FF:000001">
    <property type="entry name" value="60 kDa chaperonin"/>
    <property type="match status" value="1"/>
</dbReference>
<dbReference type="FunFam" id="3.50.7.10:FF:000001">
    <property type="entry name" value="60 kDa chaperonin"/>
    <property type="match status" value="1"/>
</dbReference>
<dbReference type="Gene3D" id="3.50.7.10">
    <property type="entry name" value="GroEL"/>
    <property type="match status" value="1"/>
</dbReference>
<dbReference type="Gene3D" id="1.10.560.10">
    <property type="entry name" value="GroEL-like equatorial domain"/>
    <property type="match status" value="1"/>
</dbReference>
<dbReference type="Gene3D" id="3.30.260.10">
    <property type="entry name" value="TCP-1-like chaperonin intermediate domain"/>
    <property type="match status" value="1"/>
</dbReference>
<dbReference type="HAMAP" id="MF_00600">
    <property type="entry name" value="CH60"/>
    <property type="match status" value="1"/>
</dbReference>
<dbReference type="InterPro" id="IPR018370">
    <property type="entry name" value="Chaperonin_Cpn60_CS"/>
</dbReference>
<dbReference type="InterPro" id="IPR001844">
    <property type="entry name" value="Cpn60/GroEL"/>
</dbReference>
<dbReference type="InterPro" id="IPR002423">
    <property type="entry name" value="Cpn60/GroEL/TCP-1"/>
</dbReference>
<dbReference type="InterPro" id="IPR027409">
    <property type="entry name" value="GroEL-like_apical_dom_sf"/>
</dbReference>
<dbReference type="InterPro" id="IPR027413">
    <property type="entry name" value="GROEL-like_equatorial_sf"/>
</dbReference>
<dbReference type="InterPro" id="IPR027410">
    <property type="entry name" value="TCP-1-like_intermed_sf"/>
</dbReference>
<dbReference type="NCBIfam" id="TIGR02348">
    <property type="entry name" value="GroEL"/>
    <property type="match status" value="1"/>
</dbReference>
<dbReference type="NCBIfam" id="NF000592">
    <property type="entry name" value="PRK00013.1"/>
    <property type="match status" value="1"/>
</dbReference>
<dbReference type="NCBIfam" id="NF009487">
    <property type="entry name" value="PRK12849.1"/>
    <property type="match status" value="1"/>
</dbReference>
<dbReference type="NCBIfam" id="NF009488">
    <property type="entry name" value="PRK12850.1"/>
    <property type="match status" value="1"/>
</dbReference>
<dbReference type="NCBIfam" id="NF009489">
    <property type="entry name" value="PRK12851.1"/>
    <property type="match status" value="1"/>
</dbReference>
<dbReference type="PANTHER" id="PTHR45633">
    <property type="entry name" value="60 KDA HEAT SHOCK PROTEIN, MITOCHONDRIAL"/>
    <property type="match status" value="1"/>
</dbReference>
<dbReference type="Pfam" id="PF00118">
    <property type="entry name" value="Cpn60_TCP1"/>
    <property type="match status" value="1"/>
</dbReference>
<dbReference type="PRINTS" id="PR00298">
    <property type="entry name" value="CHAPERONIN60"/>
</dbReference>
<dbReference type="SUPFAM" id="SSF52029">
    <property type="entry name" value="GroEL apical domain-like"/>
    <property type="match status" value="1"/>
</dbReference>
<dbReference type="SUPFAM" id="SSF48592">
    <property type="entry name" value="GroEL equatorial domain-like"/>
    <property type="match status" value="2"/>
</dbReference>
<dbReference type="PROSITE" id="PS00296">
    <property type="entry name" value="CHAPERONINS_CPN60"/>
    <property type="match status" value="1"/>
</dbReference>
<keyword id="KW-0067">ATP-binding</keyword>
<keyword id="KW-0143">Chaperone</keyword>
<keyword id="KW-0963">Cytoplasm</keyword>
<keyword id="KW-0413">Isomerase</keyword>
<keyword id="KW-0547">Nucleotide-binding</keyword>
<keyword id="KW-1185">Reference proteome</keyword>
<reference key="1">
    <citation type="submission" date="2006-12" db="EMBL/GenBank/DDBJ databases">
        <title>Complete sequence of Shewanella amazonensis SB2B.</title>
        <authorList>
            <consortium name="US DOE Joint Genome Institute"/>
            <person name="Copeland A."/>
            <person name="Lucas S."/>
            <person name="Lapidus A."/>
            <person name="Barry K."/>
            <person name="Detter J.C."/>
            <person name="Glavina del Rio T."/>
            <person name="Hammon N."/>
            <person name="Israni S."/>
            <person name="Dalin E."/>
            <person name="Tice H."/>
            <person name="Pitluck S."/>
            <person name="Munk A.C."/>
            <person name="Brettin T."/>
            <person name="Bruce D."/>
            <person name="Han C."/>
            <person name="Tapia R."/>
            <person name="Gilna P."/>
            <person name="Schmutz J."/>
            <person name="Larimer F."/>
            <person name="Land M."/>
            <person name="Hauser L."/>
            <person name="Kyrpides N."/>
            <person name="Mikhailova N."/>
            <person name="Fredrickson J."/>
            <person name="Richardson P."/>
        </authorList>
    </citation>
    <scope>NUCLEOTIDE SEQUENCE [LARGE SCALE GENOMIC DNA]</scope>
    <source>
        <strain>ATCC BAA-1098 / SB2B</strain>
    </source>
</reference>
<gene>
    <name evidence="1" type="primary">groEL</name>
    <name evidence="1" type="synonym">groL</name>
    <name type="ordered locus">Sama_3124</name>
</gene>
<protein>
    <recommendedName>
        <fullName evidence="1">Chaperonin GroEL</fullName>
        <ecNumber evidence="1">5.6.1.7</ecNumber>
    </recommendedName>
    <alternativeName>
        <fullName evidence="1">60 kDa chaperonin</fullName>
    </alternativeName>
    <alternativeName>
        <fullName evidence="1">Chaperonin-60</fullName>
        <shortName evidence="1">Cpn60</shortName>
    </alternativeName>
</protein>
<proteinExistence type="inferred from homology"/>
<evidence type="ECO:0000255" key="1">
    <source>
        <dbReference type="HAMAP-Rule" id="MF_00600"/>
    </source>
</evidence>
<comment type="function">
    <text evidence="1">Together with its co-chaperonin GroES, plays an essential role in assisting protein folding. The GroEL-GroES system forms a nano-cage that allows encapsulation of the non-native substrate proteins and provides a physical environment optimized to promote and accelerate protein folding.</text>
</comment>
<comment type="catalytic activity">
    <reaction evidence="1">
        <text>ATP + H2O + a folded polypeptide = ADP + phosphate + an unfolded polypeptide.</text>
        <dbReference type="EC" id="5.6.1.7"/>
    </reaction>
</comment>
<comment type="subunit">
    <text evidence="1">Forms a cylinder of 14 subunits composed of two heptameric rings stacked back-to-back. Interacts with the co-chaperonin GroES.</text>
</comment>
<comment type="subcellular location">
    <subcellularLocation>
        <location evidence="1">Cytoplasm</location>
    </subcellularLocation>
</comment>
<comment type="similarity">
    <text evidence="1">Belongs to the chaperonin (HSP60) family.</text>
</comment>
<organism>
    <name type="scientific">Shewanella amazonensis (strain ATCC BAA-1098 / SB2B)</name>
    <dbReference type="NCBI Taxonomy" id="326297"/>
    <lineage>
        <taxon>Bacteria</taxon>
        <taxon>Pseudomonadati</taxon>
        <taxon>Pseudomonadota</taxon>
        <taxon>Gammaproteobacteria</taxon>
        <taxon>Alteromonadales</taxon>
        <taxon>Shewanellaceae</taxon>
        <taxon>Shewanella</taxon>
    </lineage>
</organism>
<feature type="chain" id="PRO_1000025832" description="Chaperonin GroEL">
    <location>
        <begin position="1"/>
        <end position="545"/>
    </location>
</feature>
<feature type="binding site" evidence="1">
    <location>
        <begin position="30"/>
        <end position="33"/>
    </location>
    <ligand>
        <name>ATP</name>
        <dbReference type="ChEBI" id="CHEBI:30616"/>
    </ligand>
</feature>
<feature type="binding site" evidence="1">
    <location>
        <position position="51"/>
    </location>
    <ligand>
        <name>ATP</name>
        <dbReference type="ChEBI" id="CHEBI:30616"/>
    </ligand>
</feature>
<feature type="binding site" evidence="1">
    <location>
        <begin position="87"/>
        <end position="91"/>
    </location>
    <ligand>
        <name>ATP</name>
        <dbReference type="ChEBI" id="CHEBI:30616"/>
    </ligand>
</feature>
<feature type="binding site" evidence="1">
    <location>
        <position position="415"/>
    </location>
    <ligand>
        <name>ATP</name>
        <dbReference type="ChEBI" id="CHEBI:30616"/>
    </ligand>
</feature>
<feature type="binding site" evidence="1">
    <location>
        <position position="495"/>
    </location>
    <ligand>
        <name>ATP</name>
        <dbReference type="ChEBI" id="CHEBI:30616"/>
    </ligand>
</feature>
<accession>A1SAC0</accession>
<sequence length="545" mass="56935">MAAKEVVFGNDARVKMLAGVNILANAVKVTLGPKGRNVVLEKSFGAPLITKDGVSVAKEIELEDKFENMGAQMVKEVASKANDAAGDGTTTATVLAQAIVNEGLKAVAAGMNPMDLKRGIDKAVAAAVVELKALSQECADSKAIAQVGTISANSDESIGDIIATAMEKVGKEGVITVEEGQALENELDVVEGMQFDRGYLSPYFINKPETGAVELDNPFVLLVDKKISNIRELLPILEGLAKTGKPLLIVAEDVEGEALATLVVNNMRGIVKVAAVKAPGFGDRRKAMLQDIAILTGGTVIAEEIGLELEKATLEDLGTAKRVVITKDNTTIIDGNGAEEQIKARVGQIKQQIEETTSDYDREKLQERMAKLAGGVAVIKVGAATEVEMKEKKARVEDALHATRAAVEEGVVPGGGVALVRVASKIANVDVANEDQKHGVVIALRAMEAPLRQIATNAGEEASVVANTVKNGSGNFGYNAGNDSYGDMLEMGILDPTKVTRSALQFAASVAGLMITTEAMVAELPKADAPDMGGMGGGMGGMGMM</sequence>